<proteinExistence type="evidence at protein level"/>
<feature type="chain" id="PRO_0000443527" description="NADPH-flavin oxidoreductase">
    <location>
        <begin position="1"/>
        <end position="194"/>
    </location>
</feature>
<keyword id="KW-0045">Antibiotic biosynthesis</keyword>
<keyword id="KW-0274">FAD</keyword>
<keyword id="KW-0285">Flavoprotein</keyword>
<keyword id="KW-0288">FMN</keyword>
<keyword id="KW-0521">NADP</keyword>
<keyword id="KW-0560">Oxidoreductase</keyword>
<gene>
    <name evidence="2" type="primary">vlmR</name>
</gene>
<comment type="function">
    <text evidence="1 4">Involved in the biosynthesis of the azoxy antibiotic valanimycin, which has an antitumor activity. Catalyzes the reduction of FAD/FMN to FADH(2)/FMNH(2) which are subsequently used for the hydroxylation of isobutylamine by the isobutylamine N-hydroxylase VlmH. It can reduce either FAD or flavin mononucleotide (FMN) but prefers FAD. The enzyme has a strong preference for NADPH as acceptor.</text>
</comment>
<comment type="catalytic activity">
    <reaction evidence="1">
        <text>FADH2 + NADP(+) = FAD + NADPH + 2 H(+)</text>
        <dbReference type="Rhea" id="RHEA:30151"/>
        <dbReference type="ChEBI" id="CHEBI:15378"/>
        <dbReference type="ChEBI" id="CHEBI:57692"/>
        <dbReference type="ChEBI" id="CHEBI:57783"/>
        <dbReference type="ChEBI" id="CHEBI:58307"/>
        <dbReference type="ChEBI" id="CHEBI:58349"/>
    </reaction>
</comment>
<comment type="catalytic activity">
    <reaction evidence="1">
        <text>FMNH2 + NADP(+) = FMN + NADPH + 2 H(+)</text>
        <dbReference type="Rhea" id="RHEA:21624"/>
        <dbReference type="ChEBI" id="CHEBI:15378"/>
        <dbReference type="ChEBI" id="CHEBI:57618"/>
        <dbReference type="ChEBI" id="CHEBI:57783"/>
        <dbReference type="ChEBI" id="CHEBI:58210"/>
        <dbReference type="ChEBI" id="CHEBI:58349"/>
        <dbReference type="EC" id="1.5.1.38"/>
    </reaction>
</comment>
<comment type="biophysicochemical properties">
    <kinetics>
        <KM evidence="1">3.6 uM for FAD</KM>
        <KM evidence="1">8.4 uM for FMN</KM>
        <KM evidence="1">11.1 uM for riboflavin</KM>
        <KM evidence="1">32 uM for NADPH (with 40 mM FAD)</KM>
        <text evidence="1">kcat is 62 sec(-1) for NADPH as substrate (with 40 mM FAD). kcat is 51 sec(-1) for FAD as substrate. kcat is 45 sec(-1) for FMN as substrate. kcat is 6.7 sec(-1) for riboflavin as substrate.</text>
    </kinetics>
</comment>
<comment type="subunit">
    <text evidence="1">Homodimer (PubMed:9287340). It can form an isobutylamine N-hydroxylase two component enzyme system formed of a flavin reductase component (VlmR) and a monooxygenase component (VlmH).</text>
</comment>
<comment type="similarity">
    <text evidence="3">Belongs to the non-flavoprotein flavin reductase family.</text>
</comment>
<organism>
    <name type="scientific">Streptomyces viridifaciens</name>
    <dbReference type="NCBI Taxonomy" id="48665"/>
    <lineage>
        <taxon>Bacteria</taxon>
        <taxon>Bacillati</taxon>
        <taxon>Actinomycetota</taxon>
        <taxon>Actinomycetes</taxon>
        <taxon>Kitasatosporales</taxon>
        <taxon>Streptomycetaceae</taxon>
        <taxon>Streptomyces</taxon>
    </lineage>
</organism>
<evidence type="ECO:0000269" key="1">
    <source>
    </source>
</evidence>
<evidence type="ECO:0000303" key="2">
    <source>
    </source>
</evidence>
<evidence type="ECO:0000305" key="3"/>
<evidence type="ECO:0000305" key="4">
    <source>
    </source>
</evidence>
<evidence type="ECO:0000312" key="5">
    <source>
        <dbReference type="EMBL" id="AAC45645.1"/>
    </source>
</evidence>
<evidence type="ECO:0000312" key="6">
    <source>
        <dbReference type="EMBL" id="AAN10239.1"/>
    </source>
</evidence>
<name>VLMR_STRVF</name>
<protein>
    <recommendedName>
        <fullName evidence="2">NADPH-flavin oxidoreductase</fullName>
        <ecNumber evidence="1">1.5.1.38</ecNumber>
    </recommendedName>
    <alternativeName>
        <fullName evidence="2">FAD reductase (NADPH)</fullName>
    </alternativeName>
    <alternativeName>
        <fullName evidence="2">FMN reductase (NADPH)</fullName>
    </alternativeName>
    <alternativeName>
        <fullName evidence="3">Isobutylamine N-hydroxylase, reductase component</fullName>
    </alternativeName>
</protein>
<dbReference type="EC" id="1.5.1.38" evidence="1"/>
<dbReference type="EMBL" id="U93606">
    <property type="protein sequence ID" value="AAC45645.1"/>
    <property type="molecule type" value="Genomic_DNA"/>
</dbReference>
<dbReference type="EMBL" id="AY116644">
    <property type="protein sequence ID" value="AAN10239.1"/>
    <property type="molecule type" value="Genomic_DNA"/>
</dbReference>
<dbReference type="SMR" id="O34138"/>
<dbReference type="GO" id="GO:0010181">
    <property type="term" value="F:FMN binding"/>
    <property type="evidence" value="ECO:0007669"/>
    <property type="project" value="InterPro"/>
</dbReference>
<dbReference type="GO" id="GO:0052873">
    <property type="term" value="F:FMN reductase (NADPH) activity"/>
    <property type="evidence" value="ECO:0007669"/>
    <property type="project" value="UniProtKB-EC"/>
</dbReference>
<dbReference type="GO" id="GO:0042602">
    <property type="term" value="F:riboflavin reductase (NADPH) activity"/>
    <property type="evidence" value="ECO:0007669"/>
    <property type="project" value="TreeGrafter"/>
</dbReference>
<dbReference type="GO" id="GO:0017000">
    <property type="term" value="P:antibiotic biosynthetic process"/>
    <property type="evidence" value="ECO:0007669"/>
    <property type="project" value="UniProtKB-KW"/>
</dbReference>
<dbReference type="Gene3D" id="2.30.110.10">
    <property type="entry name" value="Electron Transport, Fmn-binding Protein, Chain A"/>
    <property type="match status" value="1"/>
</dbReference>
<dbReference type="InterPro" id="IPR002563">
    <property type="entry name" value="Flavin_Rdtase-like_dom"/>
</dbReference>
<dbReference type="InterPro" id="IPR050268">
    <property type="entry name" value="NADH-dep_flavin_reductase"/>
</dbReference>
<dbReference type="InterPro" id="IPR012349">
    <property type="entry name" value="Split_barrel_FMN-bd"/>
</dbReference>
<dbReference type="PANTHER" id="PTHR30466">
    <property type="entry name" value="FLAVIN REDUCTASE"/>
    <property type="match status" value="1"/>
</dbReference>
<dbReference type="PANTHER" id="PTHR30466:SF1">
    <property type="entry name" value="FMN REDUCTASE (NADH) RUTF"/>
    <property type="match status" value="1"/>
</dbReference>
<dbReference type="Pfam" id="PF01613">
    <property type="entry name" value="Flavin_Reduct"/>
    <property type="match status" value="1"/>
</dbReference>
<dbReference type="SMART" id="SM00903">
    <property type="entry name" value="Flavin_Reduct"/>
    <property type="match status" value="1"/>
</dbReference>
<dbReference type="SUPFAM" id="SSF50475">
    <property type="entry name" value="FMN-binding split barrel"/>
    <property type="match status" value="1"/>
</dbReference>
<sequence>MTPSAAATGHEAADEQRLRELRGLTRQLPTGVAVVTAQDGEVAHGATVSTVSVLSQQPLRIGVSLRRGSYLTGLIRQRRVFALNVLSSRQSAVADWFANPERPRGWRQFDYVRWTAHPKAGMPVLEDALAQLHCRLTDLIPLGASDDLLVAEVLDGRGRNGRPLVNFNGRLHDVEFRGVVRVSRDQPSAVTSLE</sequence>
<reference key="1">
    <citation type="journal article" date="1997" name="Arch. Biochem. Biophys.">
        <title>Purification and characterization of isobutylamine N-hydroxylase from the valanimycin producer Streptomyces viridifaciens MG456-hF10.</title>
        <authorList>
            <person name="Parry R.J."/>
            <person name="Li W."/>
        </authorList>
    </citation>
    <scope>NUCLEOTIDE SEQUENCE [GENOMIC DNA]</scope>
    <scope>FUNCTION</scope>
    <source>
        <strain evidence="6">MG456-hF10</strain>
    </source>
</reference>
<reference key="2">
    <citation type="journal article" date="1997" name="J. Bacteriol.">
        <title>Cloning, analysis, and overexpression of the gene encoding isobutylamine N-hydroxylase from the valanimycin producer, Streptomyces viridifaciens.</title>
        <authorList>
            <person name="Parry R.J."/>
            <person name="Li W."/>
            <person name="Cooper H.N."/>
        </authorList>
    </citation>
    <scope>NUCLEOTIDE SEQUENCE [GENOMIC DNA]</scope>
    <source>
        <strain evidence="6">MG456-hF10</strain>
    </source>
</reference>
<reference key="3">
    <citation type="journal article" date="1997" name="J. Biol. Chem.">
        <title>An NADPH:FAD oxidoreductase from the valanimycin producer, Streptomyces viridifaciens. Cloning, analysis, and overexpression.</title>
        <authorList>
            <person name="Parry R.J."/>
            <person name="Li W."/>
        </authorList>
    </citation>
    <scope>NUCLEOTIDE SEQUENCE [GENOMIC DNA]</scope>
    <scope>FUNCTION</scope>
    <scope>CATALYTIC ACTIVITY</scope>
    <scope>BIOPHYSICOCHEMICAL PROPERTIES</scope>
    <scope>SUBUNIT</scope>
    <scope>SUBSTRATE SPECIFICITY</scope>
    <source>
        <strain evidence="5">MG456-hF10</strain>
    </source>
</reference>
<reference key="4">
    <citation type="journal article" date="2000" name="Microbiology">
        <title>A novel valanimycin-resistance determinant (vlmF) from Streptomyces viridifaciens MG456-hF10.</title>
        <authorList>
            <person name="Ma Y."/>
            <person name="Patel J."/>
            <person name="Parry R.J."/>
        </authorList>
    </citation>
    <scope>NUCLEOTIDE SEQUENCE [GENOMIC DNA]</scope>
    <source>
        <strain evidence="6">MG456-hF10</strain>
    </source>
</reference>
<reference key="5">
    <citation type="journal article" date="2002" name="Mol. Microbiol.">
        <title>Molecular characterization and analysis of the biosynthetic gene cluster for the azoxy antibiotic valanimycin.</title>
        <authorList>
            <person name="Garg R.P."/>
            <person name="Ma Y."/>
            <person name="Hoyt J.C."/>
            <person name="Parry R.J."/>
        </authorList>
    </citation>
    <scope>NUCLEOTIDE SEQUENCE [GENOMIC DNA]</scope>
    <source>
        <strain evidence="6">MG456-hF10</strain>
    </source>
</reference>
<accession>O34138</accession>